<reference key="1">
    <citation type="journal article" date="2011" name="Cell">
        <title>Insight into structure and assembly of the nuclear pore complex by utilizing the genome of a eukaryotic thermophile.</title>
        <authorList>
            <person name="Amlacher S."/>
            <person name="Sarges P."/>
            <person name="Flemming D."/>
            <person name="van Noort V."/>
            <person name="Kunze R."/>
            <person name="Devos D.P."/>
            <person name="Arumugam M."/>
            <person name="Bork P."/>
            <person name="Hurt E."/>
        </authorList>
    </citation>
    <scope>NUCLEOTIDE SEQUENCE [LARGE SCALE GENOMIC DNA]</scope>
    <source>
        <strain>DSM 1495 / CBS 144.50 / IMI 039719</strain>
    </source>
</reference>
<reference evidence="10" key="2">
    <citation type="journal article" date="2015" name="Acta Crystallogr. F Struct. Biol. Commun.">
        <title>Structure of the catalytic domain of Mre11 from Chaetomium thermophilum.</title>
        <authorList>
            <person name="Seifert F.U."/>
            <person name="Lammens K."/>
            <person name="Hopfner K.P."/>
        </authorList>
    </citation>
    <scope>X-RAY CRYSTALLOGRAPHY (2.78 ANGSTROMS) OF 1-537 IN COMPLEX WITH MANGANESE</scope>
    <scope>COFACTOR</scope>
</reference>
<reference evidence="11" key="3">
    <citation type="journal article" date="2016" name="EMBO J.">
        <title>Structural mechanism of ATP-dependent DNA binding and DNA end bridging by eukaryotic Rad50.</title>
        <authorList>
            <person name="Seifert F.U."/>
            <person name="Lammens K."/>
            <person name="Stoehr G."/>
            <person name="Kessler B."/>
            <person name="Hopfner K.P."/>
        </authorList>
    </citation>
    <scope>X-RAY CRYSTALLOGRAPHY (3.00 ANGSTROMS) OF 436-537 IN COMPLEX WITH RAD50</scope>
</reference>
<reference evidence="12" key="4">
    <citation type="journal article" date="2023" name="Mol. Cell">
        <title>Cryo-EM structure of the Mre11-Rad50-Nbs1 complex reveals the molecular mechanism of scaffolding functions.</title>
        <authorList>
            <person name="Rotheneder M."/>
            <person name="Stakyte K."/>
            <person name="van de Logt E."/>
            <person name="Bartho J.D."/>
            <person name="Lammens K."/>
            <person name="Fan Y."/>
            <person name="Alt A."/>
            <person name="Kessler B."/>
            <person name="Jung C."/>
            <person name="Roos W.P."/>
            <person name="Steigenberger B."/>
            <person name="Hopfner K.P."/>
        </authorList>
    </citation>
    <scope>STRUCTURE BY ELECTRON MICROSCOPY (4.00 ANGSTROMS) IN COMPLEX WITH MANGANESE; RAD50 AND NBS1</scope>
    <scope>COFACTOR</scope>
    <scope>IDENTIFICATION IN THE MRE11 COMPLEX</scope>
</reference>
<evidence type="ECO:0000250" key="1">
    <source>
        <dbReference type="UniProtKB" id="P49959"/>
    </source>
</evidence>
<evidence type="ECO:0000255" key="2">
    <source>
        <dbReference type="PIRSR" id="PIRSR000882-1"/>
    </source>
</evidence>
<evidence type="ECO:0000256" key="3">
    <source>
        <dbReference type="SAM" id="MobiDB-lite"/>
    </source>
</evidence>
<evidence type="ECO:0000269" key="4">
    <source>
    </source>
</evidence>
<evidence type="ECO:0000269" key="5">
    <source>
    </source>
</evidence>
<evidence type="ECO:0000269" key="6">
    <source>
    </source>
</evidence>
<evidence type="ECO:0000303" key="7">
    <source>
    </source>
</evidence>
<evidence type="ECO:0000305" key="8"/>
<evidence type="ECO:0000312" key="9">
    <source>
        <dbReference type="EMBL" id="EGS24049.1"/>
    </source>
</evidence>
<evidence type="ECO:0007744" key="10">
    <source>
        <dbReference type="PDB" id="4YKE"/>
    </source>
</evidence>
<evidence type="ECO:0007744" key="11">
    <source>
        <dbReference type="PDB" id="5DA9"/>
    </source>
</evidence>
<evidence type="ECO:0007744" key="12">
    <source>
        <dbReference type="PDB" id="7ZR1"/>
    </source>
</evidence>
<evidence type="ECO:0007829" key="13">
    <source>
        <dbReference type="PDB" id="4YKE"/>
    </source>
</evidence>
<evidence type="ECO:0007829" key="14">
    <source>
        <dbReference type="PDB" id="5DA9"/>
    </source>
</evidence>
<keyword id="KW-0002">3D-structure</keyword>
<keyword id="KW-0158">Chromosome</keyword>
<keyword id="KW-0227">DNA damage</keyword>
<keyword id="KW-0234">DNA repair</keyword>
<keyword id="KW-0255">Endonuclease</keyword>
<keyword id="KW-0269">Exonuclease</keyword>
<keyword id="KW-0378">Hydrolase</keyword>
<keyword id="KW-0464">Manganese</keyword>
<keyword id="KW-0469">Meiosis</keyword>
<keyword id="KW-0479">Metal-binding</keyword>
<keyword id="KW-0540">Nuclease</keyword>
<keyword id="KW-0539">Nucleus</keyword>
<keyword id="KW-1185">Reference proteome</keyword>
<keyword id="KW-0779">Telomere</keyword>
<protein>
    <recommendedName>
        <fullName evidence="8">Double-strand break repair protein MRE11</fullName>
        <ecNumber evidence="1">3.1.-.-</ecNumber>
    </recommendedName>
</protein>
<accession>G0RYR3</accession>
<sequence length="730" mass="82912">MPQTAGPDTIRILVSTDNHVGYEERDPIRKDDSWRTFDEIMQLARTKDVDMVLLGGDLFHDNKPSRKAMYQVMRSLRKNCLGMKPCELEFLSDPAEVFEGAFPHVNYYDPDINVSIPVFSIHGNHDDPSGDGHLCSLDLLQVAGLVNYFGRVPEADNIHVKPILLQKGKTKLALYGMSNVRDERIHRTFRDNKVRFYRPSQQTGDWFNLLTLHQNHYAHTPTGYLSENMLPDFLDLVIWGHEHECLIDPKKNPETGFHVMQPGSSIATSLVPGEAVPKHIAILSITGKSFEVEKIPLRTVRPFVIREITLATDKRFKGLEKKQDNRQEVTKRLMQIVEEMIAEANEMWRSLHEDSQDDEDEEQPLPLIRLKVEYSSPEGTKFEVENPQRFSNRFAGKVANQNDVVHFYRKKTGTTRKPKEGKRELPEGIAEALEDSDSISVDALVQEFFAQQSLKILPQAPFGDAVNQFVSKDDKHAVEMFVMDSLSSQVRGLLQLDDDKINEGLDSHIEDFRKVMEKNFLSGQQKQAQRRRRFKEKPEGWDSDLNGHWTLQPEAIEELSSSPEPAKEGGRVRPASRITVGDEDNLFEEEEFVQKTTAKRAPTTRATRKTAAATRATTATKASAPAKKSIAAPRGRKRANPFQDSAEEEEDVIMDDDDDYKPAPPVKAPPPKPARETQTRGAPKTRQTTLNFSQAERPTRTTQKAIEISDDEISEDDAFESMPARKSKRY</sequence>
<gene>
    <name evidence="7" type="primary">MRE11</name>
    <name evidence="9" type="ORF">CTHT_0007600</name>
</gene>
<dbReference type="EC" id="3.1.-.-" evidence="1"/>
<dbReference type="EMBL" id="GL988032">
    <property type="protein sequence ID" value="EGS24049.1"/>
    <property type="molecule type" value="Genomic_DNA"/>
</dbReference>
<dbReference type="RefSeq" id="XP_006691291.1">
    <property type="nucleotide sequence ID" value="XM_006691228.1"/>
</dbReference>
<dbReference type="PDB" id="4YKE">
    <property type="method" value="X-ray"/>
    <property type="resolution" value="2.78 A"/>
    <property type="chains" value="A/B=1-537"/>
</dbReference>
<dbReference type="PDB" id="5DA9">
    <property type="method" value="X-ray"/>
    <property type="resolution" value="3.00 A"/>
    <property type="chains" value="C/D=436-537"/>
</dbReference>
<dbReference type="PDB" id="7ZR1">
    <property type="method" value="EM"/>
    <property type="resolution" value="4.00 A"/>
    <property type="chains" value="A/B=1-730"/>
</dbReference>
<dbReference type="PDBsum" id="4YKE"/>
<dbReference type="PDBsum" id="5DA9"/>
<dbReference type="PDBsum" id="7ZR1"/>
<dbReference type="EMDB" id="EMD-14877"/>
<dbReference type="EMDB" id="EMD-14879"/>
<dbReference type="EMDB" id="EMD-14880"/>
<dbReference type="EMDB" id="EMD-14881"/>
<dbReference type="EMDB" id="EMD-14882"/>
<dbReference type="SMR" id="G0RYR3"/>
<dbReference type="STRING" id="759272.G0RYR3"/>
<dbReference type="GeneID" id="18254798"/>
<dbReference type="KEGG" id="cthr:CTHT_0007600"/>
<dbReference type="eggNOG" id="KOG2310">
    <property type="taxonomic scope" value="Eukaryota"/>
</dbReference>
<dbReference type="HOGENOM" id="CLU_009535_1_1_1"/>
<dbReference type="OMA" id="ESCMFNA"/>
<dbReference type="OrthoDB" id="30417at2759"/>
<dbReference type="EvolutionaryTrace" id="G0RYR3"/>
<dbReference type="Proteomes" id="UP000008066">
    <property type="component" value="Unassembled WGS sequence"/>
</dbReference>
<dbReference type="GO" id="GO:0000781">
    <property type="term" value="C:chromosome, telomeric region"/>
    <property type="evidence" value="ECO:0007669"/>
    <property type="project" value="UniProtKB-SubCell"/>
</dbReference>
<dbReference type="GO" id="GO:0030870">
    <property type="term" value="C:Mre11 complex"/>
    <property type="evidence" value="ECO:0000314"/>
    <property type="project" value="UniProtKB"/>
</dbReference>
<dbReference type="GO" id="GO:0035861">
    <property type="term" value="C:site of double-strand break"/>
    <property type="evidence" value="ECO:0007669"/>
    <property type="project" value="TreeGrafter"/>
</dbReference>
<dbReference type="GO" id="GO:0008296">
    <property type="term" value="F:3'-5'-DNA exonuclease activity"/>
    <property type="evidence" value="ECO:0007669"/>
    <property type="project" value="InterPro"/>
</dbReference>
<dbReference type="GO" id="GO:0030145">
    <property type="term" value="F:manganese ion binding"/>
    <property type="evidence" value="ECO:0007669"/>
    <property type="project" value="InterPro"/>
</dbReference>
<dbReference type="GO" id="GO:0000014">
    <property type="term" value="F:single-stranded DNA endodeoxyribonuclease activity"/>
    <property type="evidence" value="ECO:0007669"/>
    <property type="project" value="TreeGrafter"/>
</dbReference>
<dbReference type="GO" id="GO:0000724">
    <property type="term" value="P:double-strand break repair via homologous recombination"/>
    <property type="evidence" value="ECO:0007669"/>
    <property type="project" value="TreeGrafter"/>
</dbReference>
<dbReference type="GO" id="GO:0006303">
    <property type="term" value="P:double-strand break repair via nonhomologous end joining"/>
    <property type="evidence" value="ECO:0007669"/>
    <property type="project" value="TreeGrafter"/>
</dbReference>
<dbReference type="GO" id="GO:0042138">
    <property type="term" value="P:meiotic DNA double-strand break formation"/>
    <property type="evidence" value="ECO:0007669"/>
    <property type="project" value="TreeGrafter"/>
</dbReference>
<dbReference type="GO" id="GO:0097552">
    <property type="term" value="P:mitochondrial double-strand break repair via homologous recombination"/>
    <property type="evidence" value="ECO:0007669"/>
    <property type="project" value="TreeGrafter"/>
</dbReference>
<dbReference type="GO" id="GO:0007095">
    <property type="term" value="P:mitotic G2 DNA damage checkpoint signaling"/>
    <property type="evidence" value="ECO:0007669"/>
    <property type="project" value="TreeGrafter"/>
</dbReference>
<dbReference type="GO" id="GO:0031573">
    <property type="term" value="P:mitotic intra-S DNA damage checkpoint signaling"/>
    <property type="evidence" value="ECO:0007669"/>
    <property type="project" value="TreeGrafter"/>
</dbReference>
<dbReference type="GO" id="GO:0000723">
    <property type="term" value="P:telomere maintenance"/>
    <property type="evidence" value="ECO:0007669"/>
    <property type="project" value="TreeGrafter"/>
</dbReference>
<dbReference type="CDD" id="cd00840">
    <property type="entry name" value="MPP_Mre11_N"/>
    <property type="match status" value="1"/>
</dbReference>
<dbReference type="FunFam" id="3.60.21.10:FF:000011">
    <property type="entry name" value="Double-strand break repair protein"/>
    <property type="match status" value="1"/>
</dbReference>
<dbReference type="Gene3D" id="3.60.21.10">
    <property type="match status" value="1"/>
</dbReference>
<dbReference type="Gene3D" id="3.30.110.110">
    <property type="entry name" value="Mre11, capping domain"/>
    <property type="match status" value="1"/>
</dbReference>
<dbReference type="InterPro" id="IPR004843">
    <property type="entry name" value="Calcineurin-like_PHP_ApaH"/>
</dbReference>
<dbReference type="InterPro" id="IPR029052">
    <property type="entry name" value="Metallo-depent_PP-like"/>
</dbReference>
<dbReference type="InterPro" id="IPR003701">
    <property type="entry name" value="Mre11"/>
</dbReference>
<dbReference type="InterPro" id="IPR038487">
    <property type="entry name" value="Mre11_capping_dom"/>
</dbReference>
<dbReference type="InterPro" id="IPR007281">
    <property type="entry name" value="Mre11_DNA-bd"/>
</dbReference>
<dbReference type="InterPro" id="IPR041796">
    <property type="entry name" value="Mre11_N"/>
</dbReference>
<dbReference type="NCBIfam" id="TIGR00583">
    <property type="entry name" value="mre11"/>
    <property type="match status" value="1"/>
</dbReference>
<dbReference type="PANTHER" id="PTHR10139">
    <property type="entry name" value="DOUBLE-STRAND BREAK REPAIR PROTEIN MRE11"/>
    <property type="match status" value="1"/>
</dbReference>
<dbReference type="PANTHER" id="PTHR10139:SF1">
    <property type="entry name" value="DOUBLE-STRAND BREAK REPAIR PROTEIN MRE11"/>
    <property type="match status" value="1"/>
</dbReference>
<dbReference type="Pfam" id="PF00149">
    <property type="entry name" value="Metallophos"/>
    <property type="match status" value="1"/>
</dbReference>
<dbReference type="Pfam" id="PF04152">
    <property type="entry name" value="Mre11_DNA_bind"/>
    <property type="match status" value="1"/>
</dbReference>
<dbReference type="PIRSF" id="PIRSF000882">
    <property type="entry name" value="DSB_repair_MRE11"/>
    <property type="match status" value="1"/>
</dbReference>
<dbReference type="SMART" id="SM01347">
    <property type="entry name" value="Mre11_DNA_bind"/>
    <property type="match status" value="1"/>
</dbReference>
<dbReference type="SUPFAM" id="SSF56300">
    <property type="entry name" value="Metallo-dependent phosphatases"/>
    <property type="match status" value="1"/>
</dbReference>
<comment type="function">
    <text evidence="1">Core component of the MRN complex, which plays a central role in double-strand break (DSB) repair, DNA recombination, maintenance of telomere integrity and meiosis (By similarity). The MRN complex is involved in the repair of DNA double-strand breaks (DSBs) via homologous recombination (HR), an error-free mechanism which primarily occurs during S and G2 phases (By similarity). The complex (1) mediates the end resection of damaged DNA, which generates proper single-stranded DNA, a key initial steps in HR, and is (2) required for the recruitment of other repair factors and efficient activation of ATM and ATR upon DNA damage (By similarity). Within the MRN complex, MRE11 possesses both single-strand endonuclease activity and double-strand-specific 3'-5' exonuclease activity (By similarity). MRE11 first endonucleolytically cleaves the 5' strand at DNA DSB ends to prevent non-homologous end joining (NHEJ) and licence HR (By similarity). It then generates a single-stranded DNA gap via 3' to 5' exonucleolytic degradation, which is required for single-strand invasion and recombination (By similarity).</text>
</comment>
<comment type="cofactor">
    <cofactor evidence="4 6">
        <name>Mn(2+)</name>
        <dbReference type="ChEBI" id="CHEBI:29035"/>
    </cofactor>
</comment>
<comment type="subunit">
    <text evidence="5 6">Component of the MRN complex composed of two heterodimers RAD50 and MRE11 associated with a single NBS1.</text>
</comment>
<comment type="subcellular location">
    <subcellularLocation>
        <location evidence="1">Nucleus</location>
    </subcellularLocation>
    <subcellularLocation>
        <location evidence="1">Chromosome</location>
        <location evidence="1">Telomere</location>
    </subcellularLocation>
    <subcellularLocation>
        <location evidence="1">Chromosome</location>
    </subcellularLocation>
    <text evidence="1">Localizes to discrete nuclear foci after treatment with genotoxic agents.</text>
</comment>
<comment type="similarity">
    <text evidence="8">Belongs to the MRE11/RAD32 family.</text>
</comment>
<proteinExistence type="evidence at protein level"/>
<feature type="chain" id="PRO_0000460314" description="Double-strand break repair protein MRE11">
    <location>
        <begin position="1"/>
        <end position="730"/>
    </location>
</feature>
<feature type="region of interest" description="Disordered" evidence="3">
    <location>
        <begin position="521"/>
        <end position="730"/>
    </location>
</feature>
<feature type="compositionally biased region" description="Acidic residues" evidence="3">
    <location>
        <begin position="581"/>
        <end position="591"/>
    </location>
</feature>
<feature type="compositionally biased region" description="Low complexity" evidence="3">
    <location>
        <begin position="595"/>
        <end position="633"/>
    </location>
</feature>
<feature type="compositionally biased region" description="Acidic residues" evidence="3">
    <location>
        <begin position="645"/>
        <end position="659"/>
    </location>
</feature>
<feature type="compositionally biased region" description="Pro residues" evidence="3">
    <location>
        <begin position="662"/>
        <end position="672"/>
    </location>
</feature>
<feature type="compositionally biased region" description="Polar residues" evidence="3">
    <location>
        <begin position="685"/>
        <end position="704"/>
    </location>
</feature>
<feature type="compositionally biased region" description="Acidic residues" evidence="3">
    <location>
        <begin position="708"/>
        <end position="719"/>
    </location>
</feature>
<feature type="active site" description="Proton donor" evidence="2">
    <location>
        <position position="125"/>
    </location>
</feature>
<feature type="binding site" evidence="4 6 10 12">
    <location>
        <position position="17"/>
    </location>
    <ligand>
        <name>Mn(2+)</name>
        <dbReference type="ChEBI" id="CHEBI:29035"/>
        <label>1</label>
    </ligand>
</feature>
<feature type="binding site" evidence="4 6 10 12">
    <location>
        <position position="19"/>
    </location>
    <ligand>
        <name>Mn(2+)</name>
        <dbReference type="ChEBI" id="CHEBI:29035"/>
        <label>1</label>
    </ligand>
</feature>
<feature type="binding site" evidence="4 6 10 12">
    <location>
        <position position="57"/>
    </location>
    <ligand>
        <name>Mn(2+)</name>
        <dbReference type="ChEBI" id="CHEBI:29035"/>
        <label>1</label>
    </ligand>
</feature>
<feature type="binding site" evidence="4 6 10 12">
    <location>
        <position position="57"/>
    </location>
    <ligand>
        <name>Mn(2+)</name>
        <dbReference type="ChEBI" id="CHEBI:29035"/>
        <label>2</label>
    </ligand>
</feature>
<feature type="binding site" evidence="4 6 10 12">
    <location>
        <position position="124"/>
    </location>
    <ligand>
        <name>Mn(2+)</name>
        <dbReference type="ChEBI" id="CHEBI:29035"/>
        <label>2</label>
    </ligand>
</feature>
<feature type="binding site" evidence="4 6 10 12">
    <location>
        <position position="213"/>
    </location>
    <ligand>
        <name>Mn(2+)</name>
        <dbReference type="ChEBI" id="CHEBI:29035"/>
        <label>2</label>
    </ligand>
</feature>
<feature type="binding site" evidence="4 6 10 12">
    <location>
        <position position="241"/>
    </location>
    <ligand>
        <name>Mn(2+)</name>
        <dbReference type="ChEBI" id="CHEBI:29035"/>
        <label>2</label>
    </ligand>
</feature>
<feature type="binding site" evidence="4 6 10 12">
    <location>
        <position position="243"/>
    </location>
    <ligand>
        <name>Mn(2+)</name>
        <dbReference type="ChEBI" id="CHEBI:29035"/>
        <label>1</label>
    </ligand>
</feature>
<feature type="strand" evidence="13">
    <location>
        <begin position="9"/>
        <end position="15"/>
    </location>
</feature>
<feature type="turn" evidence="13">
    <location>
        <begin position="21"/>
        <end position="25"/>
    </location>
</feature>
<feature type="turn" evidence="13">
    <location>
        <begin position="27"/>
        <end position="29"/>
    </location>
</feature>
<feature type="helix" evidence="13">
    <location>
        <begin position="32"/>
        <end position="46"/>
    </location>
</feature>
<feature type="strand" evidence="13">
    <location>
        <begin position="50"/>
        <end position="54"/>
    </location>
</feature>
<feature type="strand" evidence="13">
    <location>
        <begin position="59"/>
        <end position="63"/>
    </location>
</feature>
<feature type="helix" evidence="13">
    <location>
        <begin position="66"/>
        <end position="80"/>
    </location>
</feature>
<feature type="strand" evidence="13">
    <location>
        <begin position="81"/>
        <end position="84"/>
    </location>
</feature>
<feature type="helix" evidence="13">
    <location>
        <begin position="94"/>
        <end position="97"/>
    </location>
</feature>
<feature type="strand" evidence="13">
    <location>
        <begin position="100"/>
        <end position="102"/>
    </location>
</feature>
<feature type="helix" evidence="13">
    <location>
        <begin position="106"/>
        <end position="108"/>
    </location>
</feature>
<feature type="strand" evidence="13">
    <location>
        <begin position="110"/>
        <end position="112"/>
    </location>
</feature>
<feature type="strand" evidence="13">
    <location>
        <begin position="114"/>
        <end position="116"/>
    </location>
</feature>
<feature type="strand" evidence="13">
    <location>
        <begin position="118"/>
        <end position="120"/>
    </location>
</feature>
<feature type="turn" evidence="13">
    <location>
        <begin position="124"/>
        <end position="126"/>
    </location>
</feature>
<feature type="strand" evidence="13">
    <location>
        <begin position="130"/>
        <end position="132"/>
    </location>
</feature>
<feature type="helix" evidence="13">
    <location>
        <begin position="136"/>
        <end position="142"/>
    </location>
</feature>
<feature type="strand" evidence="13">
    <location>
        <begin position="155"/>
        <end position="160"/>
    </location>
</feature>
<feature type="strand" evidence="13">
    <location>
        <begin position="163"/>
        <end position="167"/>
    </location>
</feature>
<feature type="strand" evidence="13">
    <location>
        <begin position="170"/>
        <end position="176"/>
    </location>
</feature>
<feature type="helix" evidence="13">
    <location>
        <begin position="182"/>
        <end position="190"/>
    </location>
</feature>
<feature type="strand" evidence="13">
    <location>
        <begin position="194"/>
        <end position="196"/>
    </location>
</feature>
<feature type="strand" evidence="13">
    <location>
        <begin position="207"/>
        <end position="212"/>
    </location>
</feature>
<feature type="strand" evidence="13">
    <location>
        <begin position="219"/>
        <end position="224"/>
    </location>
</feature>
<feature type="helix" evidence="13">
    <location>
        <begin position="227"/>
        <end position="229"/>
    </location>
</feature>
<feature type="strand" evidence="13">
    <location>
        <begin position="236"/>
        <end position="239"/>
    </location>
</feature>
<feature type="strand" evidence="13">
    <location>
        <begin position="246"/>
        <end position="251"/>
    </location>
</feature>
<feature type="turn" evidence="13">
    <location>
        <begin position="253"/>
        <end position="255"/>
    </location>
</feature>
<feature type="strand" evidence="13">
    <location>
        <begin position="258"/>
        <end position="261"/>
    </location>
</feature>
<feature type="helix" evidence="13">
    <location>
        <begin position="272"/>
        <end position="275"/>
    </location>
</feature>
<feature type="strand" evidence="13">
    <location>
        <begin position="279"/>
        <end position="286"/>
    </location>
</feature>
<feature type="strand" evidence="13">
    <location>
        <begin position="289"/>
        <end position="296"/>
    </location>
</feature>
<feature type="strand" evidence="13">
    <location>
        <begin position="298"/>
        <end position="300"/>
    </location>
</feature>
<feature type="strand" evidence="13">
    <location>
        <begin position="303"/>
        <end position="309"/>
    </location>
</feature>
<feature type="turn" evidence="13">
    <location>
        <begin position="310"/>
        <end position="312"/>
    </location>
</feature>
<feature type="strand" evidence="13">
    <location>
        <begin position="314"/>
        <end position="316"/>
    </location>
</feature>
<feature type="helix" evidence="13">
    <location>
        <begin position="318"/>
        <end position="322"/>
    </location>
</feature>
<feature type="helix" evidence="13">
    <location>
        <begin position="329"/>
        <end position="353"/>
    </location>
</feature>
<feature type="strand" evidence="13">
    <location>
        <begin position="367"/>
        <end position="373"/>
    </location>
</feature>
<feature type="strand" evidence="13">
    <location>
        <begin position="377"/>
        <end position="379"/>
    </location>
</feature>
<feature type="helix" evidence="13">
    <location>
        <begin position="387"/>
        <end position="392"/>
    </location>
</feature>
<feature type="strand" evidence="13">
    <location>
        <begin position="405"/>
        <end position="408"/>
    </location>
</feature>
<feature type="helix" evidence="14">
    <location>
        <begin position="441"/>
        <end position="451"/>
    </location>
</feature>
<feature type="strand" evidence="14">
    <location>
        <begin position="455"/>
        <end position="457"/>
    </location>
</feature>
<feature type="helix" evidence="14">
    <location>
        <begin position="459"/>
        <end position="471"/>
    </location>
</feature>
<feature type="helix" evidence="14">
    <location>
        <begin position="477"/>
        <end position="495"/>
    </location>
</feature>
<feature type="helix" evidence="14">
    <location>
        <begin position="498"/>
        <end position="503"/>
    </location>
</feature>
<feature type="helix" evidence="14">
    <location>
        <begin position="506"/>
        <end position="521"/>
    </location>
</feature>
<organism>
    <name type="scientific">Chaetomium thermophilum (strain DSM 1495 / CBS 144.50 / IMI 039719)</name>
    <name type="common">Thermochaetoides thermophila</name>
    <dbReference type="NCBI Taxonomy" id="759272"/>
    <lineage>
        <taxon>Eukaryota</taxon>
        <taxon>Fungi</taxon>
        <taxon>Dikarya</taxon>
        <taxon>Ascomycota</taxon>
        <taxon>Pezizomycotina</taxon>
        <taxon>Sordariomycetes</taxon>
        <taxon>Sordariomycetidae</taxon>
        <taxon>Sordariales</taxon>
        <taxon>Chaetomiaceae</taxon>
        <taxon>Thermochaetoides</taxon>
    </lineage>
</organism>
<name>MRE11_CHATD</name>